<comment type="function">
    <text>Antimicrobial peptide, that adopts an alpha helical conformation which can disrupt bacterial membranes. Each caerin displays a different antimicrobial specificity.</text>
</comment>
<comment type="subcellular location">
    <subcellularLocation>
        <location>Secreted</location>
    </subcellularLocation>
</comment>
<comment type="tissue specificity">
    <text>Expressed by the skin parotoid and/or rostral glands.</text>
</comment>
<comment type="mass spectrometry" mass="2464.0" method="FAB" evidence="1">
    <molecule>Caerin-2.2</molecule>
</comment>
<comment type="similarity">
    <text evidence="2">Belongs to the frog skin active peptide (FSAP) family. Caerin subfamily.</text>
</comment>
<proteinExistence type="evidence at protein level"/>
<name>CR22_RANCA</name>
<accession>P62571</accession>
<accession>P56234</accession>
<dbReference type="GO" id="GO:0005576">
    <property type="term" value="C:extracellular region"/>
    <property type="evidence" value="ECO:0007669"/>
    <property type="project" value="UniProtKB-SubCell"/>
</dbReference>
<dbReference type="GO" id="GO:0042742">
    <property type="term" value="P:defense response to bacterium"/>
    <property type="evidence" value="ECO:0007669"/>
    <property type="project" value="UniProtKB-KW"/>
</dbReference>
<dbReference type="InterPro" id="IPR032021">
    <property type="entry name" value="Frog_Litoria"/>
</dbReference>
<dbReference type="Pfam" id="PF16049">
    <property type="entry name" value="Antimicrobial24"/>
    <property type="match status" value="1"/>
</dbReference>
<protein>
    <recommendedName>
        <fullName>Caerin-2.2</fullName>
    </recommendedName>
    <component>
        <recommendedName>
            <fullName>Caerin-2.2.1</fullName>
        </recommendedName>
    </component>
</protein>
<evidence type="ECO:0000269" key="1">
    <source ref="1"/>
</evidence>
<evidence type="ECO:0000305" key="2"/>
<feature type="peptide" id="PRO_0000010186" description="Caerin-2.2">
    <location>
        <begin position="1"/>
        <end position="25"/>
    </location>
</feature>
<feature type="peptide" id="PRO_0000010187" description="Caerin-2.2.1">
    <location>
        <begin position="9"/>
        <end position="25"/>
    </location>
</feature>
<reference key="1">
    <citation type="journal article" date="1993" name="J. Chem. Res.">
        <title>Peptides from Australian frogs. The structures of the caerins from Litoria caerula.</title>
        <authorList>
            <person name="Stone D.J.M."/>
            <person name="Waugh R.J."/>
            <person name="Bowie J.H."/>
            <person name="Wallace J.C."/>
            <person name="Tyler M.J."/>
        </authorList>
    </citation>
    <scope>PROTEIN SEQUENCE</scope>
    <scope>MASS SPECTROMETRY</scope>
    <source>
        <tissue>Parotoid gland</tissue>
    </source>
</reference>
<keyword id="KW-0878">Amphibian defense peptide</keyword>
<keyword id="KW-0044">Antibiotic</keyword>
<keyword id="KW-0929">Antimicrobial</keyword>
<keyword id="KW-0903">Direct protein sequencing</keyword>
<keyword id="KW-0964">Secreted</keyword>
<sequence length="25" mass="2466">GLVSSIGRALGGLLADVVKSKEQPA</sequence>
<organism>
    <name type="scientific">Ranoidea caerulea</name>
    <name type="common">Green tree frog</name>
    <name type="synonym">Litoria caerulea</name>
    <dbReference type="NCBI Taxonomy" id="30344"/>
    <lineage>
        <taxon>Eukaryota</taxon>
        <taxon>Metazoa</taxon>
        <taxon>Chordata</taxon>
        <taxon>Craniata</taxon>
        <taxon>Vertebrata</taxon>
        <taxon>Euteleostomi</taxon>
        <taxon>Amphibia</taxon>
        <taxon>Batrachia</taxon>
        <taxon>Anura</taxon>
        <taxon>Neobatrachia</taxon>
        <taxon>Hyloidea</taxon>
        <taxon>Hylidae</taxon>
        <taxon>Pelodryadinae</taxon>
        <taxon>Ranoidea</taxon>
    </lineage>
</organism>